<reference key="1">
    <citation type="journal article" date="1998" name="Nature">
        <title>Analysis of 1.9 Mb of contiguous sequence from chromosome 4 of Arabidopsis thaliana.</title>
        <authorList>
            <person name="Bevan M."/>
            <person name="Bancroft I."/>
            <person name="Bent E."/>
            <person name="Love K."/>
            <person name="Goodman H.M."/>
            <person name="Dean C."/>
            <person name="Bergkamp R."/>
            <person name="Dirkse W."/>
            <person name="van Staveren M."/>
            <person name="Stiekema W."/>
            <person name="Drost L."/>
            <person name="Ridley P."/>
            <person name="Hudson S.-A."/>
            <person name="Patel K."/>
            <person name="Murphy G."/>
            <person name="Piffanelli P."/>
            <person name="Wedler H."/>
            <person name="Wedler E."/>
            <person name="Wambutt R."/>
            <person name="Weitzenegger T."/>
            <person name="Pohl T."/>
            <person name="Terryn N."/>
            <person name="Gielen J."/>
            <person name="Villarroel R."/>
            <person name="De Clercq R."/>
            <person name="van Montagu M."/>
            <person name="Lecharny A."/>
            <person name="Aubourg S."/>
            <person name="Gy I."/>
            <person name="Kreis M."/>
            <person name="Lao N."/>
            <person name="Kavanagh T."/>
            <person name="Hempel S."/>
            <person name="Kotter P."/>
            <person name="Entian K.-D."/>
            <person name="Rieger M."/>
            <person name="Schaefer M."/>
            <person name="Funk B."/>
            <person name="Mueller-Auer S."/>
            <person name="Silvey M."/>
            <person name="James R."/>
            <person name="Monfort A."/>
            <person name="Pons A."/>
            <person name="Puigdomenech P."/>
            <person name="Douka A."/>
            <person name="Voukelatou E."/>
            <person name="Milioni D."/>
            <person name="Hatzopoulos P."/>
            <person name="Piravandi E."/>
            <person name="Obermaier B."/>
            <person name="Hilbert H."/>
            <person name="Duesterhoeft A."/>
            <person name="Moores T."/>
            <person name="Jones J.D.G."/>
            <person name="Eneva T."/>
            <person name="Palme K."/>
            <person name="Benes V."/>
            <person name="Rechmann S."/>
            <person name="Ansorge W."/>
            <person name="Cooke R."/>
            <person name="Berger C."/>
            <person name="Delseny M."/>
            <person name="Voet M."/>
            <person name="Volckaert G."/>
            <person name="Mewes H.-W."/>
            <person name="Klosterman S."/>
            <person name="Schueller C."/>
            <person name="Chalwatzis N."/>
        </authorList>
    </citation>
    <scope>NUCLEOTIDE SEQUENCE [LARGE SCALE GENOMIC DNA]</scope>
    <source>
        <strain>cv. Columbia</strain>
    </source>
</reference>
<reference key="2">
    <citation type="journal article" date="1999" name="Nature">
        <title>Sequence and analysis of chromosome 4 of the plant Arabidopsis thaliana.</title>
        <authorList>
            <person name="Mayer K.F.X."/>
            <person name="Schueller C."/>
            <person name="Wambutt R."/>
            <person name="Murphy G."/>
            <person name="Volckaert G."/>
            <person name="Pohl T."/>
            <person name="Duesterhoeft A."/>
            <person name="Stiekema W."/>
            <person name="Entian K.-D."/>
            <person name="Terryn N."/>
            <person name="Harris B."/>
            <person name="Ansorge W."/>
            <person name="Brandt P."/>
            <person name="Grivell L.A."/>
            <person name="Rieger M."/>
            <person name="Weichselgartner M."/>
            <person name="de Simone V."/>
            <person name="Obermaier B."/>
            <person name="Mache R."/>
            <person name="Mueller M."/>
            <person name="Kreis M."/>
            <person name="Delseny M."/>
            <person name="Puigdomenech P."/>
            <person name="Watson M."/>
            <person name="Schmidtheini T."/>
            <person name="Reichert B."/>
            <person name="Portetelle D."/>
            <person name="Perez-Alonso M."/>
            <person name="Boutry M."/>
            <person name="Bancroft I."/>
            <person name="Vos P."/>
            <person name="Hoheisel J."/>
            <person name="Zimmermann W."/>
            <person name="Wedler H."/>
            <person name="Ridley P."/>
            <person name="Langham S.-A."/>
            <person name="McCullagh B."/>
            <person name="Bilham L."/>
            <person name="Robben J."/>
            <person name="van der Schueren J."/>
            <person name="Grymonprez B."/>
            <person name="Chuang Y.-J."/>
            <person name="Vandenbussche F."/>
            <person name="Braeken M."/>
            <person name="Weltjens I."/>
            <person name="Voet M."/>
            <person name="Bastiaens I."/>
            <person name="Aert R."/>
            <person name="Defoor E."/>
            <person name="Weitzenegger T."/>
            <person name="Bothe G."/>
            <person name="Ramsperger U."/>
            <person name="Hilbert H."/>
            <person name="Braun M."/>
            <person name="Holzer E."/>
            <person name="Brandt A."/>
            <person name="Peters S."/>
            <person name="van Staveren M."/>
            <person name="Dirkse W."/>
            <person name="Mooijman P."/>
            <person name="Klein Lankhorst R."/>
            <person name="Rose M."/>
            <person name="Hauf J."/>
            <person name="Koetter P."/>
            <person name="Berneiser S."/>
            <person name="Hempel S."/>
            <person name="Feldpausch M."/>
            <person name="Lamberth S."/>
            <person name="Van den Daele H."/>
            <person name="De Keyser A."/>
            <person name="Buysshaert C."/>
            <person name="Gielen J."/>
            <person name="Villarroel R."/>
            <person name="De Clercq R."/>
            <person name="van Montagu M."/>
            <person name="Rogers J."/>
            <person name="Cronin A."/>
            <person name="Quail M.A."/>
            <person name="Bray-Allen S."/>
            <person name="Clark L."/>
            <person name="Doggett J."/>
            <person name="Hall S."/>
            <person name="Kay M."/>
            <person name="Lennard N."/>
            <person name="McLay K."/>
            <person name="Mayes R."/>
            <person name="Pettett A."/>
            <person name="Rajandream M.A."/>
            <person name="Lyne M."/>
            <person name="Benes V."/>
            <person name="Rechmann S."/>
            <person name="Borkova D."/>
            <person name="Bloecker H."/>
            <person name="Scharfe M."/>
            <person name="Grimm M."/>
            <person name="Loehnert T.-H."/>
            <person name="Dose S."/>
            <person name="de Haan M."/>
            <person name="Maarse A.C."/>
            <person name="Schaefer M."/>
            <person name="Mueller-Auer S."/>
            <person name="Gabel C."/>
            <person name="Fuchs M."/>
            <person name="Fartmann B."/>
            <person name="Granderath K."/>
            <person name="Dauner D."/>
            <person name="Herzl A."/>
            <person name="Neumann S."/>
            <person name="Argiriou A."/>
            <person name="Vitale D."/>
            <person name="Liguori R."/>
            <person name="Piravandi E."/>
            <person name="Massenet O."/>
            <person name="Quigley F."/>
            <person name="Clabauld G."/>
            <person name="Muendlein A."/>
            <person name="Felber R."/>
            <person name="Schnabl S."/>
            <person name="Hiller R."/>
            <person name="Schmidt W."/>
            <person name="Lecharny A."/>
            <person name="Aubourg S."/>
            <person name="Chefdor F."/>
            <person name="Cooke R."/>
            <person name="Berger C."/>
            <person name="Monfort A."/>
            <person name="Casacuberta E."/>
            <person name="Gibbons T."/>
            <person name="Weber N."/>
            <person name="Vandenbol M."/>
            <person name="Bargues M."/>
            <person name="Terol J."/>
            <person name="Torres A."/>
            <person name="Perez-Perez A."/>
            <person name="Purnelle B."/>
            <person name="Bent E."/>
            <person name="Johnson S."/>
            <person name="Tacon D."/>
            <person name="Jesse T."/>
            <person name="Heijnen L."/>
            <person name="Schwarz S."/>
            <person name="Scholler P."/>
            <person name="Heber S."/>
            <person name="Francs P."/>
            <person name="Bielke C."/>
            <person name="Frishman D."/>
            <person name="Haase D."/>
            <person name="Lemcke K."/>
            <person name="Mewes H.-W."/>
            <person name="Stocker S."/>
            <person name="Zaccaria P."/>
            <person name="Bevan M."/>
            <person name="Wilson R.K."/>
            <person name="de la Bastide M."/>
            <person name="Habermann K."/>
            <person name="Parnell L."/>
            <person name="Dedhia N."/>
            <person name="Gnoj L."/>
            <person name="Schutz K."/>
            <person name="Huang E."/>
            <person name="Spiegel L."/>
            <person name="Sekhon M."/>
            <person name="Murray J."/>
            <person name="Sheet P."/>
            <person name="Cordes M."/>
            <person name="Abu-Threideh J."/>
            <person name="Stoneking T."/>
            <person name="Kalicki J."/>
            <person name="Graves T."/>
            <person name="Harmon G."/>
            <person name="Edwards J."/>
            <person name="Latreille P."/>
            <person name="Courtney L."/>
            <person name="Cloud J."/>
            <person name="Abbott A."/>
            <person name="Scott K."/>
            <person name="Johnson D."/>
            <person name="Minx P."/>
            <person name="Bentley D."/>
            <person name="Fulton B."/>
            <person name="Miller N."/>
            <person name="Greco T."/>
            <person name="Kemp K."/>
            <person name="Kramer J."/>
            <person name="Fulton L."/>
            <person name="Mardis E."/>
            <person name="Dante M."/>
            <person name="Pepin K."/>
            <person name="Hillier L.W."/>
            <person name="Nelson J."/>
            <person name="Spieth J."/>
            <person name="Ryan E."/>
            <person name="Andrews S."/>
            <person name="Geisel C."/>
            <person name="Layman D."/>
            <person name="Du H."/>
            <person name="Ali J."/>
            <person name="Berghoff A."/>
            <person name="Jones K."/>
            <person name="Drone K."/>
            <person name="Cotton M."/>
            <person name="Joshu C."/>
            <person name="Antonoiu B."/>
            <person name="Zidanic M."/>
            <person name="Strong C."/>
            <person name="Sun H."/>
            <person name="Lamar B."/>
            <person name="Yordan C."/>
            <person name="Ma P."/>
            <person name="Zhong J."/>
            <person name="Preston R."/>
            <person name="Vil D."/>
            <person name="Shekher M."/>
            <person name="Matero A."/>
            <person name="Shah R."/>
            <person name="Swaby I.K."/>
            <person name="O'Shaughnessy A."/>
            <person name="Rodriguez M."/>
            <person name="Hoffman J."/>
            <person name="Till S."/>
            <person name="Granat S."/>
            <person name="Shohdy N."/>
            <person name="Hasegawa A."/>
            <person name="Hameed A."/>
            <person name="Lodhi M."/>
            <person name="Johnson A."/>
            <person name="Chen E."/>
            <person name="Marra M.A."/>
            <person name="Martienssen R."/>
            <person name="McCombie W.R."/>
        </authorList>
    </citation>
    <scope>NUCLEOTIDE SEQUENCE [LARGE SCALE GENOMIC DNA]</scope>
    <source>
        <strain>cv. Columbia</strain>
    </source>
</reference>
<reference key="3">
    <citation type="journal article" date="2017" name="Plant J.">
        <title>Araport11: a complete reannotation of the Arabidopsis thaliana reference genome.</title>
        <authorList>
            <person name="Cheng C.Y."/>
            <person name="Krishnakumar V."/>
            <person name="Chan A.P."/>
            <person name="Thibaud-Nissen F."/>
            <person name="Schobel S."/>
            <person name="Town C.D."/>
        </authorList>
    </citation>
    <scope>GENOME REANNOTATION</scope>
    <source>
        <strain>cv. Columbia</strain>
    </source>
</reference>
<reference key="4">
    <citation type="journal article" date="2002" name="Gene">
        <title>Analysis and expression of the class III peroxidase large gene family in Arabidopsis thaliana.</title>
        <authorList>
            <person name="Tognolli M."/>
            <person name="Penel C."/>
            <person name="Greppin H."/>
            <person name="Simon P."/>
        </authorList>
    </citation>
    <scope>GENE FAMILY ORGANIZATION</scope>
    <scope>NOMENCLATURE</scope>
    <source>
        <strain>cv. Columbia</strain>
    </source>
</reference>
<protein>
    <recommendedName>
        <fullName>Peroxidase 41</fullName>
        <shortName>Atperox P41</shortName>
        <ecNumber>1.11.1.7</ecNumber>
    </recommendedName>
</protein>
<gene>
    <name type="primary">PER41</name>
    <name type="synonym">P41</name>
    <name type="ordered locus">At4g17690</name>
    <name type="ORF">dl4880w</name>
    <name type="ORF">FCAALL.96</name>
</gene>
<evidence type="ECO:0000255" key="1"/>
<evidence type="ECO:0000255" key="2">
    <source>
        <dbReference type="PROSITE-ProRule" id="PRU00297"/>
    </source>
</evidence>
<evidence type="ECO:0000255" key="3">
    <source>
        <dbReference type="PROSITE-ProRule" id="PRU10012"/>
    </source>
</evidence>
<keyword id="KW-0106">Calcium</keyword>
<keyword id="KW-1015">Disulfide bond</keyword>
<keyword id="KW-0325">Glycoprotein</keyword>
<keyword id="KW-0349">Heme</keyword>
<keyword id="KW-0376">Hydrogen peroxide</keyword>
<keyword id="KW-0408">Iron</keyword>
<keyword id="KW-0479">Metal-binding</keyword>
<keyword id="KW-0560">Oxidoreductase</keyword>
<keyword id="KW-0575">Peroxidase</keyword>
<keyword id="KW-1185">Reference proteome</keyword>
<keyword id="KW-0964">Secreted</keyword>
<keyword id="KW-0732">Signal</keyword>
<sequence length="326" mass="36198">MSSVINVLFVVLVFVPSIYSAPPPNLTKDYYQKTCPDFNKIVRETVTPKQGQQPTTAAGTLRLFFHDCFMEGCDASVLIATNSFNKAERDDDLNESLPGDAFDIVTRIKTALELSCPGVVSCADILAQATRDLVTMVGGPFYEVKLGRKDGFESKAHKVKGNLPLANQSVPDMLSIFKKNGFTLKELVALSGGHTIGFSHCKEFSNRIFPKVDPELNAKFAGVLKDLCKNFETNKTMAAFLDPVTPGKFDNMYFKNLKRGLGLLASDHILFKDPSTRPFVELYANNQTAFFEDFARAMEKLGRVGVKGEKDGEVRRRCDHFNKLNV</sequence>
<name>PER41_ARATH</name>
<feature type="signal peptide" evidence="1">
    <location>
        <begin position="1"/>
        <end position="20"/>
    </location>
</feature>
<feature type="chain" id="PRO_0000023707" description="Peroxidase 41">
    <location>
        <begin position="21"/>
        <end position="326"/>
    </location>
</feature>
<feature type="active site" description="Proton acceptor" evidence="2 3">
    <location>
        <position position="66"/>
    </location>
</feature>
<feature type="binding site" evidence="2">
    <location>
        <position position="67"/>
    </location>
    <ligand>
        <name>Ca(2+)</name>
        <dbReference type="ChEBI" id="CHEBI:29108"/>
        <label>1</label>
    </ligand>
</feature>
<feature type="binding site" evidence="2">
    <location>
        <position position="72"/>
    </location>
    <ligand>
        <name>Ca(2+)</name>
        <dbReference type="ChEBI" id="CHEBI:29108"/>
        <label>1</label>
    </ligand>
</feature>
<feature type="binding site" evidence="2">
    <location>
        <position position="74"/>
    </location>
    <ligand>
        <name>Ca(2+)</name>
        <dbReference type="ChEBI" id="CHEBI:29108"/>
        <label>1</label>
    </ligand>
</feature>
<feature type="binding site" evidence="2">
    <location>
        <position position="76"/>
    </location>
    <ligand>
        <name>Ca(2+)</name>
        <dbReference type="ChEBI" id="CHEBI:29108"/>
        <label>1</label>
    </ligand>
</feature>
<feature type="binding site" evidence="2">
    <location>
        <position position="164"/>
    </location>
    <ligand>
        <name>substrate</name>
    </ligand>
</feature>
<feature type="binding site" description="axial binding residue" evidence="2">
    <location>
        <position position="194"/>
    </location>
    <ligand>
        <name>heme b</name>
        <dbReference type="ChEBI" id="CHEBI:60344"/>
    </ligand>
    <ligandPart>
        <name>Fe</name>
        <dbReference type="ChEBI" id="CHEBI:18248"/>
    </ligandPart>
</feature>
<feature type="binding site" evidence="2">
    <location>
        <position position="195"/>
    </location>
    <ligand>
        <name>Ca(2+)</name>
        <dbReference type="ChEBI" id="CHEBI:29108"/>
        <label>2</label>
    </ligand>
</feature>
<feature type="binding site" evidence="2">
    <location>
        <position position="242"/>
    </location>
    <ligand>
        <name>Ca(2+)</name>
        <dbReference type="ChEBI" id="CHEBI:29108"/>
        <label>2</label>
    </ligand>
</feature>
<feature type="binding site" evidence="2">
    <location>
        <position position="245"/>
    </location>
    <ligand>
        <name>Ca(2+)</name>
        <dbReference type="ChEBI" id="CHEBI:29108"/>
        <label>2</label>
    </ligand>
</feature>
<feature type="binding site" evidence="2">
    <location>
        <position position="250"/>
    </location>
    <ligand>
        <name>Ca(2+)</name>
        <dbReference type="ChEBI" id="CHEBI:29108"/>
        <label>2</label>
    </ligand>
</feature>
<feature type="site" description="Transition state stabilizer" evidence="2">
    <location>
        <position position="62"/>
    </location>
</feature>
<feature type="glycosylation site" description="N-linked (GlcNAc...) asparagine" evidence="1">
    <location>
        <position position="25"/>
    </location>
</feature>
<feature type="glycosylation site" description="N-linked (GlcNAc...) asparagine" evidence="1">
    <location>
        <position position="167"/>
    </location>
</feature>
<feature type="glycosylation site" description="N-linked (GlcNAc...) asparagine" evidence="1">
    <location>
        <position position="234"/>
    </location>
</feature>
<feature type="glycosylation site" description="N-linked (GlcNAc...) asparagine" evidence="1">
    <location>
        <position position="286"/>
    </location>
</feature>
<feature type="disulfide bond" evidence="2">
    <location>
        <begin position="35"/>
        <end position="116"/>
    </location>
</feature>
<feature type="disulfide bond" evidence="2">
    <location>
        <begin position="68"/>
        <end position="73"/>
    </location>
</feature>
<feature type="disulfide bond" evidence="2">
    <location>
        <begin position="122"/>
        <end position="318"/>
    </location>
</feature>
<feature type="disulfide bond" evidence="2">
    <location>
        <begin position="201"/>
        <end position="228"/>
    </location>
</feature>
<accession>O23609</accession>
<dbReference type="EC" id="1.11.1.7"/>
<dbReference type="EMBL" id="Z97344">
    <property type="protein sequence ID" value="CAB10549.1"/>
    <property type="molecule type" value="Genomic_DNA"/>
</dbReference>
<dbReference type="EMBL" id="AL161547">
    <property type="protein sequence ID" value="CAB78772.1"/>
    <property type="molecule type" value="Genomic_DNA"/>
</dbReference>
<dbReference type="EMBL" id="CP002687">
    <property type="protein sequence ID" value="AEE83934.1"/>
    <property type="molecule type" value="Genomic_DNA"/>
</dbReference>
<dbReference type="PIR" id="H71446">
    <property type="entry name" value="H71446"/>
</dbReference>
<dbReference type="RefSeq" id="NP_193504.1">
    <property type="nucleotide sequence ID" value="NM_117877.2"/>
</dbReference>
<dbReference type="SMR" id="O23609"/>
<dbReference type="BioGRID" id="12782">
    <property type="interactions" value="1"/>
</dbReference>
<dbReference type="FunCoup" id="O23609">
    <property type="interactions" value="169"/>
</dbReference>
<dbReference type="STRING" id="3702.O23609"/>
<dbReference type="PeroxiBase" id="207">
    <property type="entry name" value="AtPrx41"/>
</dbReference>
<dbReference type="GlyCosmos" id="O23609">
    <property type="glycosylation" value="4 sites, No reported glycans"/>
</dbReference>
<dbReference type="GlyGen" id="O23609">
    <property type="glycosylation" value="4 sites"/>
</dbReference>
<dbReference type="PaxDb" id="3702-AT4G17690.1"/>
<dbReference type="ProteomicsDB" id="236400"/>
<dbReference type="EnsemblPlants" id="AT4G17690.1">
    <property type="protein sequence ID" value="AT4G17690.1"/>
    <property type="gene ID" value="AT4G17690"/>
</dbReference>
<dbReference type="GeneID" id="827489"/>
<dbReference type="Gramene" id="AT4G17690.1">
    <property type="protein sequence ID" value="AT4G17690.1"/>
    <property type="gene ID" value="AT4G17690"/>
</dbReference>
<dbReference type="KEGG" id="ath:AT4G17690"/>
<dbReference type="Araport" id="AT4G17690"/>
<dbReference type="TAIR" id="AT4G17690"/>
<dbReference type="eggNOG" id="ENOG502QR74">
    <property type="taxonomic scope" value="Eukaryota"/>
</dbReference>
<dbReference type="HOGENOM" id="CLU_010543_0_3_1"/>
<dbReference type="InParanoid" id="O23609"/>
<dbReference type="OMA" id="ETNKTMA"/>
<dbReference type="PhylomeDB" id="O23609"/>
<dbReference type="BioCyc" id="ARA:AT4G17690-MONOMER"/>
<dbReference type="PRO" id="PR:O23609"/>
<dbReference type="Proteomes" id="UP000006548">
    <property type="component" value="Chromosome 4"/>
</dbReference>
<dbReference type="ExpressionAtlas" id="O23609">
    <property type="expression patterns" value="baseline and differential"/>
</dbReference>
<dbReference type="GO" id="GO:0005576">
    <property type="term" value="C:extracellular region"/>
    <property type="evidence" value="ECO:0007669"/>
    <property type="project" value="UniProtKB-SubCell"/>
</dbReference>
<dbReference type="GO" id="GO:0020037">
    <property type="term" value="F:heme binding"/>
    <property type="evidence" value="ECO:0007669"/>
    <property type="project" value="InterPro"/>
</dbReference>
<dbReference type="GO" id="GO:0140825">
    <property type="term" value="F:lactoperoxidase activity"/>
    <property type="evidence" value="ECO:0007669"/>
    <property type="project" value="UniProtKB-EC"/>
</dbReference>
<dbReference type="GO" id="GO:0046872">
    <property type="term" value="F:metal ion binding"/>
    <property type="evidence" value="ECO:0007669"/>
    <property type="project" value="UniProtKB-KW"/>
</dbReference>
<dbReference type="GO" id="GO:0042744">
    <property type="term" value="P:hydrogen peroxide catabolic process"/>
    <property type="evidence" value="ECO:0007669"/>
    <property type="project" value="UniProtKB-KW"/>
</dbReference>
<dbReference type="GO" id="GO:0006979">
    <property type="term" value="P:response to oxidative stress"/>
    <property type="evidence" value="ECO:0007669"/>
    <property type="project" value="InterPro"/>
</dbReference>
<dbReference type="CDD" id="cd00693">
    <property type="entry name" value="secretory_peroxidase"/>
    <property type="match status" value="1"/>
</dbReference>
<dbReference type="FunFam" id="1.10.420.10:FF:000001">
    <property type="entry name" value="Peroxidase"/>
    <property type="match status" value="1"/>
</dbReference>
<dbReference type="FunFam" id="1.10.520.10:FF:000008">
    <property type="entry name" value="Peroxidase"/>
    <property type="match status" value="1"/>
</dbReference>
<dbReference type="Gene3D" id="1.10.520.10">
    <property type="match status" value="1"/>
</dbReference>
<dbReference type="Gene3D" id="1.10.420.10">
    <property type="entry name" value="Peroxidase, domain 2"/>
    <property type="match status" value="1"/>
</dbReference>
<dbReference type="InterPro" id="IPR002016">
    <property type="entry name" value="Haem_peroxidase"/>
</dbReference>
<dbReference type="InterPro" id="IPR010255">
    <property type="entry name" value="Haem_peroxidase_sf"/>
</dbReference>
<dbReference type="InterPro" id="IPR000823">
    <property type="entry name" value="Peroxidase_pln"/>
</dbReference>
<dbReference type="InterPro" id="IPR019794">
    <property type="entry name" value="Peroxidases_AS"/>
</dbReference>
<dbReference type="InterPro" id="IPR019793">
    <property type="entry name" value="Peroxidases_heam-ligand_BS"/>
</dbReference>
<dbReference type="InterPro" id="IPR033905">
    <property type="entry name" value="Secretory_peroxidase"/>
</dbReference>
<dbReference type="PANTHER" id="PTHR31517">
    <property type="match status" value="1"/>
</dbReference>
<dbReference type="PANTHER" id="PTHR31517:SF88">
    <property type="entry name" value="PEROXIDASE 41"/>
    <property type="match status" value="1"/>
</dbReference>
<dbReference type="Pfam" id="PF00141">
    <property type="entry name" value="peroxidase"/>
    <property type="match status" value="1"/>
</dbReference>
<dbReference type="PRINTS" id="PR00458">
    <property type="entry name" value="PEROXIDASE"/>
</dbReference>
<dbReference type="PRINTS" id="PR00461">
    <property type="entry name" value="PLPEROXIDASE"/>
</dbReference>
<dbReference type="SUPFAM" id="SSF48113">
    <property type="entry name" value="Heme-dependent peroxidases"/>
    <property type="match status" value="1"/>
</dbReference>
<dbReference type="PROSITE" id="PS00435">
    <property type="entry name" value="PEROXIDASE_1"/>
    <property type="match status" value="1"/>
</dbReference>
<dbReference type="PROSITE" id="PS00436">
    <property type="entry name" value="PEROXIDASE_2"/>
    <property type="match status" value="1"/>
</dbReference>
<dbReference type="PROSITE" id="PS50873">
    <property type="entry name" value="PEROXIDASE_4"/>
    <property type="match status" value="1"/>
</dbReference>
<organism>
    <name type="scientific">Arabidopsis thaliana</name>
    <name type="common">Mouse-ear cress</name>
    <dbReference type="NCBI Taxonomy" id="3702"/>
    <lineage>
        <taxon>Eukaryota</taxon>
        <taxon>Viridiplantae</taxon>
        <taxon>Streptophyta</taxon>
        <taxon>Embryophyta</taxon>
        <taxon>Tracheophyta</taxon>
        <taxon>Spermatophyta</taxon>
        <taxon>Magnoliopsida</taxon>
        <taxon>eudicotyledons</taxon>
        <taxon>Gunneridae</taxon>
        <taxon>Pentapetalae</taxon>
        <taxon>rosids</taxon>
        <taxon>malvids</taxon>
        <taxon>Brassicales</taxon>
        <taxon>Brassicaceae</taxon>
        <taxon>Camelineae</taxon>
        <taxon>Arabidopsis</taxon>
    </lineage>
</organism>
<comment type="function">
    <text>Removal of H(2)O(2), oxidation of toxic reductants, biosynthesis and degradation of lignin, suberization, auxin catabolism, response to environmental stresses such as wounding, pathogen attack and oxidative stress. These functions might be dependent on each isozyme/isoform in each plant tissue.</text>
</comment>
<comment type="catalytic activity">
    <reaction>
        <text>2 a phenolic donor + H2O2 = 2 a phenolic radical donor + 2 H2O</text>
        <dbReference type="Rhea" id="RHEA:56136"/>
        <dbReference type="ChEBI" id="CHEBI:15377"/>
        <dbReference type="ChEBI" id="CHEBI:16240"/>
        <dbReference type="ChEBI" id="CHEBI:139520"/>
        <dbReference type="ChEBI" id="CHEBI:139521"/>
        <dbReference type="EC" id="1.11.1.7"/>
    </reaction>
</comment>
<comment type="cofactor">
    <cofactor evidence="2">
        <name>heme b</name>
        <dbReference type="ChEBI" id="CHEBI:60344"/>
    </cofactor>
    <text evidence="2">Binds 1 heme b (iron(II)-protoporphyrin IX) group per subunit.</text>
</comment>
<comment type="cofactor">
    <cofactor evidence="2">
        <name>Ca(2+)</name>
        <dbReference type="ChEBI" id="CHEBI:29108"/>
    </cofactor>
    <text evidence="2">Binds 2 calcium ions per subunit.</text>
</comment>
<comment type="subcellular location">
    <subcellularLocation>
        <location evidence="2">Secreted</location>
    </subcellularLocation>
</comment>
<comment type="miscellaneous">
    <text>There are 73 peroxidase genes in A.thaliana.</text>
</comment>
<comment type="similarity">
    <text evidence="2">Belongs to the peroxidase family. Classical plant (class III) peroxidase subfamily.</text>
</comment>
<proteinExistence type="inferred from homology"/>